<accession>P48504</accession>
<dbReference type="EMBL" id="X79273">
    <property type="protein sequence ID" value="CAA55860.1"/>
    <property type="molecule type" value="mRNA"/>
</dbReference>
<dbReference type="PIR" id="S48690">
    <property type="entry name" value="S48690"/>
</dbReference>
<dbReference type="SMR" id="P48504"/>
<dbReference type="FunCoup" id="P48504">
    <property type="interactions" value="1331"/>
</dbReference>
<dbReference type="STRING" id="4113.P48504"/>
<dbReference type="InParanoid" id="P48504"/>
<dbReference type="Proteomes" id="UP000011115">
    <property type="component" value="Unassembled WGS sequence"/>
</dbReference>
<dbReference type="ExpressionAtlas" id="P48504">
    <property type="expression patterns" value="baseline"/>
</dbReference>
<dbReference type="GO" id="GO:0005743">
    <property type="term" value="C:mitochondrial inner membrane"/>
    <property type="evidence" value="ECO:0007669"/>
    <property type="project" value="UniProtKB-SubCell"/>
</dbReference>
<dbReference type="GO" id="GO:0045275">
    <property type="term" value="C:respiratory chain complex III"/>
    <property type="evidence" value="ECO:0000318"/>
    <property type="project" value="GO_Central"/>
</dbReference>
<dbReference type="GO" id="GO:0006122">
    <property type="term" value="P:mitochondrial electron transport, ubiquinol to cytochrome c"/>
    <property type="evidence" value="ECO:0000318"/>
    <property type="project" value="GO_Central"/>
</dbReference>
<dbReference type="FunFam" id="1.10.287.20:FF:000001">
    <property type="entry name" value="Cytochrome b-c1 complex subunit 6"/>
    <property type="match status" value="1"/>
</dbReference>
<dbReference type="Gene3D" id="1.10.287.20">
    <property type="entry name" value="Ubiquinol-cytochrome C reductase hinge domain"/>
    <property type="match status" value="1"/>
</dbReference>
<dbReference type="InterPro" id="IPR003422">
    <property type="entry name" value="Cyt_b-c1_6"/>
</dbReference>
<dbReference type="InterPro" id="IPR023184">
    <property type="entry name" value="Ubol_cytC_Rdtase_hinge_dom"/>
</dbReference>
<dbReference type="InterPro" id="IPR036811">
    <property type="entry name" value="Ubol_cytC_Rdtase_hinge_dom_sf"/>
</dbReference>
<dbReference type="PANTHER" id="PTHR15336:SF0">
    <property type="entry name" value="CYTOCHROME B-C1 COMPLEX SUBUNIT 6, MITOCHONDRIAL"/>
    <property type="match status" value="1"/>
</dbReference>
<dbReference type="PANTHER" id="PTHR15336">
    <property type="entry name" value="UBIQUINOL-CYTOCHROME C REDUCTASE COMPLEX 7.8 KDA PROTEIN"/>
    <property type="match status" value="1"/>
</dbReference>
<dbReference type="Pfam" id="PF02320">
    <property type="entry name" value="UCR_hinge"/>
    <property type="match status" value="1"/>
</dbReference>
<dbReference type="PIRSF" id="PIRSF000019">
    <property type="entry name" value="Bc1_11K"/>
    <property type="match status" value="1"/>
</dbReference>
<dbReference type="SUPFAM" id="SSF81531">
    <property type="entry name" value="Non-heme 11 kDa protein of cytochrome bc1 complex (Ubiquinol-cytochrome c reductase)"/>
    <property type="match status" value="1"/>
</dbReference>
<proteinExistence type="evidence at protein level"/>
<reference key="1">
    <citation type="journal article" date="1994" name="FEBS Lett.">
        <title>The 'Hinge' protein of cytochrome c reductase from potato lacks the acidic domain and has no cleavable presequence.</title>
        <authorList>
            <person name="Braun H.-P."/>
            <person name="Jaensch L."/>
            <person name="Kruft V."/>
            <person name="Schmitz U.K."/>
        </authorList>
    </citation>
    <scope>NUCLEOTIDE SEQUENCE [MRNA]</scope>
    <scope>PROTEIN SEQUENCE OF 2-19</scope>
    <source>
        <strain>cv. Desiree</strain>
        <tissue>Tuber</tissue>
    </source>
</reference>
<reference key="2">
    <citation type="journal article" date="1994" name="Planta">
        <title>Molecular identification of the ten subunits of cytochrome-c reductase from potato mitochondria.</title>
        <authorList>
            <person name="Braun H.-P."/>
            <person name="Kruft V."/>
            <person name="Schmitz U.K."/>
        </authorList>
    </citation>
    <scope>PROTEIN SEQUENCE OF 2-18; 44-68 AND 63-69</scope>
    <source>
        <strain>cv. Hansa</strain>
        <tissue>Tuber</tissue>
    </source>
</reference>
<name>QCR6_SOLTU</name>
<evidence type="ECO:0000250" key="1">
    <source>
        <dbReference type="UniProtKB" id="P00126"/>
    </source>
</evidence>
<evidence type="ECO:0000250" key="2">
    <source>
        <dbReference type="UniProtKB" id="P00127"/>
    </source>
</evidence>
<evidence type="ECO:0000269" key="3">
    <source>
    </source>
</evidence>
<evidence type="ECO:0000269" key="4">
    <source>
    </source>
</evidence>
<evidence type="ECO:0000305" key="5"/>
<organism>
    <name type="scientific">Solanum tuberosum</name>
    <name type="common">Potato</name>
    <dbReference type="NCBI Taxonomy" id="4113"/>
    <lineage>
        <taxon>Eukaryota</taxon>
        <taxon>Viridiplantae</taxon>
        <taxon>Streptophyta</taxon>
        <taxon>Embryophyta</taxon>
        <taxon>Tracheophyta</taxon>
        <taxon>Spermatophyta</taxon>
        <taxon>Magnoliopsida</taxon>
        <taxon>eudicotyledons</taxon>
        <taxon>Gunneridae</taxon>
        <taxon>Pentapetalae</taxon>
        <taxon>asterids</taxon>
        <taxon>lamiids</taxon>
        <taxon>Solanales</taxon>
        <taxon>Solanaceae</taxon>
        <taxon>Solanoideae</taxon>
        <taxon>Solaneae</taxon>
        <taxon>Solanum</taxon>
    </lineage>
</organism>
<feature type="initiator methionine" description="Removed" evidence="3 4">
    <location>
        <position position="1"/>
    </location>
</feature>
<feature type="chain" id="PRO_0000193541" description="Cytochrome b-c1 complex subunit 6">
    <location>
        <begin position="2"/>
        <end position="69"/>
    </location>
</feature>
<feature type="disulfide bond" evidence="1">
    <location>
        <begin position="17"/>
        <end position="59"/>
    </location>
</feature>
<feature type="disulfide bond" evidence="2">
    <location>
        <begin position="31"/>
        <end position="45"/>
    </location>
</feature>
<protein>
    <recommendedName>
        <fullName>Cytochrome b-c1 complex subunit 6</fullName>
    </recommendedName>
    <alternativeName>
        <fullName>CR7</fullName>
    </alternativeName>
    <alternativeName>
        <fullName>Complex III subunit 6</fullName>
    </alternativeName>
    <alternativeName>
        <fullName>Complex III subunit VI</fullName>
    </alternativeName>
    <alternativeName>
        <fullName>Mitochondrial hinge protein</fullName>
    </alternativeName>
    <alternativeName>
        <fullName>Ubiquinol-cytochrome c reductase complex 7.8 kDa protein</fullName>
    </alternativeName>
</protein>
<keyword id="KW-0903">Direct protein sequencing</keyword>
<keyword id="KW-1015">Disulfide bond</keyword>
<keyword id="KW-0249">Electron transport</keyword>
<keyword id="KW-0472">Membrane</keyword>
<keyword id="KW-0496">Mitochondrion</keyword>
<keyword id="KW-0999">Mitochondrion inner membrane</keyword>
<keyword id="KW-1185">Reference proteome</keyword>
<keyword id="KW-0679">Respiratory chain</keyword>
<keyword id="KW-0813">Transport</keyword>
<comment type="function">
    <text evidence="2">Component of the ubiquinol-cytochrome c oxidoreductase, a multisubunit transmembrane complex that is part of the mitochondrial electron transport chain which drives oxidative phosphorylation. The respiratory chain contains 3 multisubunit complexes succinate dehydrogenase (complex II, CII), ubiquinol-cytochrome c oxidoreductase (cytochrome b-c1 complex, complex III, CIII) and cytochrome c oxidase (complex IV, CIV), that cooperate to transfer electrons derived from NADH and succinate to molecular oxygen, creating an electrochemical gradient over the inner membrane that drives transmembrane transport and the ATP synthase. The cytochrome b-c1 complex catalyzes electron transfer from ubiquinol to cytochrome c, linking this redox reaction to translocation of protons across the mitochondrial inner membrane, with protons being carried across the membrane as hydrogens on the quinol. In the process called Q cycle, 2 protons are consumed from the matrix, 4 protons are released into the intermembrane space and 2 electrons are passed to cytochrome c.</text>
</comment>
<comment type="subunit">
    <text evidence="2">Component of the ubiquinol-cytochrome c oxidoreductase (cytochrome b-c1 complex, complex III, CIII), a multisubunit enzyme composed of 3 respiratory subunits cytochrome b, cytochrome c1 and Rieske protein, 2 core protein subunits, and additional low-molecular weight protein subunits. The complex exists as an obligatory dimer and forms supercomplexes (SCs) in the inner mitochondrial membrane with cytochrome c oxidase (complex IV, CIV).</text>
</comment>
<comment type="subcellular location">
    <subcellularLocation>
        <location evidence="2">Mitochondrion inner membrane</location>
        <topology evidence="2">Peripheral membrane protein</topology>
        <orientation evidence="2">Intermembrane side</orientation>
    </subcellularLocation>
</comment>
<comment type="domain">
    <text>Lacks the acidic domain of other UQCRH.</text>
</comment>
<comment type="similarity">
    <text evidence="5">Belongs to the UQCRH/QCR6 family.</text>
</comment>
<sequence length="69" mass="7977">MSDEEVVDPKATLEVSCKPKCVRQLKEYQACTKRVEGDESGHKHCTGQYFDYWHCIDKCVAAKLFDHLK</sequence>